<accession>Q6HN79</accession>
<name>KDPA_BACHK</name>
<organism>
    <name type="scientific">Bacillus thuringiensis subsp. konkukian (strain 97-27)</name>
    <dbReference type="NCBI Taxonomy" id="281309"/>
    <lineage>
        <taxon>Bacteria</taxon>
        <taxon>Bacillati</taxon>
        <taxon>Bacillota</taxon>
        <taxon>Bacilli</taxon>
        <taxon>Bacillales</taxon>
        <taxon>Bacillaceae</taxon>
        <taxon>Bacillus</taxon>
        <taxon>Bacillus cereus group</taxon>
    </lineage>
</organism>
<proteinExistence type="inferred from homology"/>
<keyword id="KW-1003">Cell membrane</keyword>
<keyword id="KW-0406">Ion transport</keyword>
<keyword id="KW-0472">Membrane</keyword>
<keyword id="KW-0630">Potassium</keyword>
<keyword id="KW-0633">Potassium transport</keyword>
<keyword id="KW-0812">Transmembrane</keyword>
<keyword id="KW-1133">Transmembrane helix</keyword>
<keyword id="KW-0813">Transport</keyword>
<gene>
    <name evidence="1" type="primary">kdpA</name>
    <name type="ordered locus">BT9727_0647</name>
</gene>
<reference key="1">
    <citation type="journal article" date="2006" name="J. Bacteriol.">
        <title>Pathogenomic sequence analysis of Bacillus cereus and Bacillus thuringiensis isolates closely related to Bacillus anthracis.</title>
        <authorList>
            <person name="Han C.S."/>
            <person name="Xie G."/>
            <person name="Challacombe J.F."/>
            <person name="Altherr M.R."/>
            <person name="Bhotika S.S."/>
            <person name="Bruce D."/>
            <person name="Campbell C.S."/>
            <person name="Campbell M.L."/>
            <person name="Chen J."/>
            <person name="Chertkov O."/>
            <person name="Cleland C."/>
            <person name="Dimitrijevic M."/>
            <person name="Doggett N.A."/>
            <person name="Fawcett J.J."/>
            <person name="Glavina T."/>
            <person name="Goodwin L.A."/>
            <person name="Hill K.K."/>
            <person name="Hitchcock P."/>
            <person name="Jackson P.J."/>
            <person name="Keim P."/>
            <person name="Kewalramani A.R."/>
            <person name="Longmire J."/>
            <person name="Lucas S."/>
            <person name="Malfatti S."/>
            <person name="McMurry K."/>
            <person name="Meincke L.J."/>
            <person name="Misra M."/>
            <person name="Moseman B.L."/>
            <person name="Mundt M."/>
            <person name="Munk A.C."/>
            <person name="Okinaka R.T."/>
            <person name="Parson-Quintana B."/>
            <person name="Reilly L.P."/>
            <person name="Richardson P."/>
            <person name="Robinson D.L."/>
            <person name="Rubin E."/>
            <person name="Saunders E."/>
            <person name="Tapia R."/>
            <person name="Tesmer J.G."/>
            <person name="Thayer N."/>
            <person name="Thompson L.S."/>
            <person name="Tice H."/>
            <person name="Ticknor L.O."/>
            <person name="Wills P.L."/>
            <person name="Brettin T.S."/>
            <person name="Gilna P."/>
        </authorList>
    </citation>
    <scope>NUCLEOTIDE SEQUENCE [LARGE SCALE GENOMIC DNA]</scope>
    <source>
        <strain>97-27</strain>
    </source>
</reference>
<evidence type="ECO:0000255" key="1">
    <source>
        <dbReference type="HAMAP-Rule" id="MF_00275"/>
    </source>
</evidence>
<sequence length="555" mass="59797">MIWVAVVITMLLFILVAKPTGIYLEKAFQGSKKLDKVFGPFEKLIFKITGVKEYNQTWKQYALSLVLLNGFMIVVVYFIFRLQGVLPLNPAHIEGMEPTLAFNTAISFMTDTNLQHYSGENGLSYLSQLIGITFLMFAAPATTLALVMAFIRGLAGKELGNFFVDFTRALTRVFLPIAFVTALVFVALGVPQTLDGAVTAQTIDGVKQSIVRGPVASFVSIKELGNNGGGFFGTNSTHPFENPGQMSNILQMMLMMLLPTALPFTYGRMVGNKKQGRILFVSLFMVFLLGFITITTSELNGNPALNAMGIEHVQGSTEGKEVRFGTVFSSLYATVTTAAETGAVNTMHDTLTPIGGLVPLVNMMLNTVYGGVGAGFVNIITYAIIAVFISGLMVGRTPEFLGKKIEGKEMKLIAVTILFHPLLILGFSALALSTSLGTDAISNLGFHGLTQIVYEYTSSAVNNGSGFEGLGDATTFWNITTGLVMFLGRYFSLVTMLAVAASLKEKTVVPETVGTFRTDNGLFGGIFIGTIVIVGALTFFPMLVLGPIAEFLTLK</sequence>
<comment type="function">
    <text evidence="1">Part of the high-affinity ATP-driven potassium transport (or Kdp) system, which catalyzes the hydrolysis of ATP coupled with the electrogenic transport of potassium into the cytoplasm. This subunit binds the extracellular potassium ions and delivers the ions to the membrane domain of KdpB through an intramembrane tunnel.</text>
</comment>
<comment type="subunit">
    <text evidence="1">The system is composed of three essential subunits: KdpA, KdpB and KdpC.</text>
</comment>
<comment type="subcellular location">
    <subcellularLocation>
        <location evidence="1">Cell membrane</location>
        <topology evidence="1">Multi-pass membrane protein</topology>
    </subcellularLocation>
</comment>
<comment type="similarity">
    <text evidence="1">Belongs to the KdpA family.</text>
</comment>
<dbReference type="EMBL" id="AE017355">
    <property type="protein sequence ID" value="AAT62489.1"/>
    <property type="molecule type" value="Genomic_DNA"/>
</dbReference>
<dbReference type="RefSeq" id="WP_000638357.1">
    <property type="nucleotide sequence ID" value="NC_005957.1"/>
</dbReference>
<dbReference type="RefSeq" id="YP_034992.1">
    <property type="nucleotide sequence ID" value="NC_005957.1"/>
</dbReference>
<dbReference type="SMR" id="Q6HN79"/>
<dbReference type="KEGG" id="btk:BT9727_0647"/>
<dbReference type="PATRIC" id="fig|281309.8.peg.682"/>
<dbReference type="HOGENOM" id="CLU_018614_3_0_9"/>
<dbReference type="Proteomes" id="UP000001301">
    <property type="component" value="Chromosome"/>
</dbReference>
<dbReference type="GO" id="GO:0005886">
    <property type="term" value="C:plasma membrane"/>
    <property type="evidence" value="ECO:0007669"/>
    <property type="project" value="UniProtKB-SubCell"/>
</dbReference>
<dbReference type="GO" id="GO:0008556">
    <property type="term" value="F:P-type potassium transmembrane transporter activity"/>
    <property type="evidence" value="ECO:0007669"/>
    <property type="project" value="InterPro"/>
</dbReference>
<dbReference type="GO" id="GO:0030955">
    <property type="term" value="F:potassium ion binding"/>
    <property type="evidence" value="ECO:0007669"/>
    <property type="project" value="UniProtKB-UniRule"/>
</dbReference>
<dbReference type="HAMAP" id="MF_00275">
    <property type="entry name" value="KdpA"/>
    <property type="match status" value="1"/>
</dbReference>
<dbReference type="InterPro" id="IPR004623">
    <property type="entry name" value="KdpA"/>
</dbReference>
<dbReference type="NCBIfam" id="TIGR00680">
    <property type="entry name" value="kdpA"/>
    <property type="match status" value="1"/>
</dbReference>
<dbReference type="PANTHER" id="PTHR30607">
    <property type="entry name" value="POTASSIUM-TRANSPORTING ATPASE A CHAIN"/>
    <property type="match status" value="1"/>
</dbReference>
<dbReference type="PANTHER" id="PTHR30607:SF2">
    <property type="entry name" value="POTASSIUM-TRANSPORTING ATPASE POTASSIUM-BINDING SUBUNIT"/>
    <property type="match status" value="1"/>
</dbReference>
<dbReference type="Pfam" id="PF03814">
    <property type="entry name" value="KdpA"/>
    <property type="match status" value="1"/>
</dbReference>
<dbReference type="PIRSF" id="PIRSF001294">
    <property type="entry name" value="K_ATPaseA"/>
    <property type="match status" value="1"/>
</dbReference>
<protein>
    <recommendedName>
        <fullName evidence="1">Potassium-transporting ATPase potassium-binding subunit</fullName>
    </recommendedName>
    <alternativeName>
        <fullName evidence="1">ATP phosphohydrolase [potassium-transporting] A chain</fullName>
    </alternativeName>
    <alternativeName>
        <fullName evidence="1">Potassium-binding and translocating subunit A</fullName>
    </alternativeName>
    <alternativeName>
        <fullName evidence="1">Potassium-translocating ATPase A chain</fullName>
    </alternativeName>
</protein>
<feature type="chain" id="PRO_0000166481" description="Potassium-transporting ATPase potassium-binding subunit">
    <location>
        <begin position="1"/>
        <end position="555"/>
    </location>
</feature>
<feature type="transmembrane region" description="Helical" evidence="1">
    <location>
        <begin position="2"/>
        <end position="22"/>
    </location>
</feature>
<feature type="transmembrane region" description="Helical" evidence="1">
    <location>
        <begin position="60"/>
        <end position="80"/>
    </location>
</feature>
<feature type="transmembrane region" description="Helical" evidence="1">
    <location>
        <begin position="130"/>
        <end position="150"/>
    </location>
</feature>
<feature type="transmembrane region" description="Helical" evidence="1">
    <location>
        <begin position="173"/>
        <end position="193"/>
    </location>
</feature>
<feature type="transmembrane region" description="Helical" evidence="1">
    <location>
        <begin position="246"/>
        <end position="266"/>
    </location>
</feature>
<feature type="transmembrane region" description="Helical" evidence="1">
    <location>
        <begin position="278"/>
        <end position="298"/>
    </location>
</feature>
<feature type="transmembrane region" description="Helical" evidence="1">
    <location>
        <begin position="374"/>
        <end position="394"/>
    </location>
</feature>
<feature type="transmembrane region" description="Helical" evidence="1">
    <location>
        <begin position="412"/>
        <end position="432"/>
    </location>
</feature>
<feature type="transmembrane region" description="Helical" evidence="1">
    <location>
        <begin position="483"/>
        <end position="503"/>
    </location>
</feature>
<feature type="transmembrane region" description="Helical" evidence="1">
    <location>
        <begin position="525"/>
        <end position="545"/>
    </location>
</feature>